<gene>
    <name evidence="1" type="primary">prfA</name>
    <name type="ordered locus">Pput_0761</name>
</gene>
<protein>
    <recommendedName>
        <fullName evidence="1">Peptide chain release factor 1</fullName>
        <shortName evidence="1">RF-1</shortName>
    </recommendedName>
</protein>
<keyword id="KW-0963">Cytoplasm</keyword>
<keyword id="KW-0488">Methylation</keyword>
<keyword id="KW-0648">Protein biosynthesis</keyword>
<dbReference type="EMBL" id="CP000712">
    <property type="protein sequence ID" value="ABQ76925.1"/>
    <property type="molecule type" value="Genomic_DNA"/>
</dbReference>
<dbReference type="SMR" id="A5VYG5"/>
<dbReference type="KEGG" id="ppf:Pput_0761"/>
<dbReference type="eggNOG" id="COG0216">
    <property type="taxonomic scope" value="Bacteria"/>
</dbReference>
<dbReference type="HOGENOM" id="CLU_036856_0_1_6"/>
<dbReference type="GO" id="GO:0005737">
    <property type="term" value="C:cytoplasm"/>
    <property type="evidence" value="ECO:0007669"/>
    <property type="project" value="UniProtKB-SubCell"/>
</dbReference>
<dbReference type="GO" id="GO:0016149">
    <property type="term" value="F:translation release factor activity, codon specific"/>
    <property type="evidence" value="ECO:0007669"/>
    <property type="project" value="UniProtKB-UniRule"/>
</dbReference>
<dbReference type="FunFam" id="3.30.160.20:FF:000004">
    <property type="entry name" value="Peptide chain release factor 1"/>
    <property type="match status" value="1"/>
</dbReference>
<dbReference type="FunFam" id="3.30.70.1660:FF:000002">
    <property type="entry name" value="Peptide chain release factor 1"/>
    <property type="match status" value="1"/>
</dbReference>
<dbReference type="FunFam" id="3.30.70.1660:FF:000004">
    <property type="entry name" value="Peptide chain release factor 1"/>
    <property type="match status" value="1"/>
</dbReference>
<dbReference type="Gene3D" id="3.30.160.20">
    <property type="match status" value="1"/>
</dbReference>
<dbReference type="Gene3D" id="3.30.70.1660">
    <property type="match status" value="1"/>
</dbReference>
<dbReference type="Gene3D" id="6.10.140.1950">
    <property type="match status" value="1"/>
</dbReference>
<dbReference type="HAMAP" id="MF_00093">
    <property type="entry name" value="Rel_fac_1"/>
    <property type="match status" value="1"/>
</dbReference>
<dbReference type="InterPro" id="IPR005139">
    <property type="entry name" value="PCRF"/>
</dbReference>
<dbReference type="InterPro" id="IPR000352">
    <property type="entry name" value="Pep_chain_release_fac_I"/>
</dbReference>
<dbReference type="InterPro" id="IPR045853">
    <property type="entry name" value="Pep_chain_release_fac_I_sf"/>
</dbReference>
<dbReference type="InterPro" id="IPR050057">
    <property type="entry name" value="Prokaryotic/Mito_RF"/>
</dbReference>
<dbReference type="InterPro" id="IPR004373">
    <property type="entry name" value="RF-1"/>
</dbReference>
<dbReference type="NCBIfam" id="TIGR00019">
    <property type="entry name" value="prfA"/>
    <property type="match status" value="1"/>
</dbReference>
<dbReference type="NCBIfam" id="NF001859">
    <property type="entry name" value="PRK00591.1"/>
    <property type="match status" value="1"/>
</dbReference>
<dbReference type="PANTHER" id="PTHR43804">
    <property type="entry name" value="LD18447P"/>
    <property type="match status" value="1"/>
</dbReference>
<dbReference type="PANTHER" id="PTHR43804:SF7">
    <property type="entry name" value="LD18447P"/>
    <property type="match status" value="1"/>
</dbReference>
<dbReference type="Pfam" id="PF03462">
    <property type="entry name" value="PCRF"/>
    <property type="match status" value="1"/>
</dbReference>
<dbReference type="Pfam" id="PF00472">
    <property type="entry name" value="RF-1"/>
    <property type="match status" value="1"/>
</dbReference>
<dbReference type="SMART" id="SM00937">
    <property type="entry name" value="PCRF"/>
    <property type="match status" value="1"/>
</dbReference>
<dbReference type="SUPFAM" id="SSF75620">
    <property type="entry name" value="Release factor"/>
    <property type="match status" value="1"/>
</dbReference>
<dbReference type="PROSITE" id="PS00745">
    <property type="entry name" value="RF_PROK_I"/>
    <property type="match status" value="1"/>
</dbReference>
<feature type="chain" id="PRO_1000004935" description="Peptide chain release factor 1">
    <location>
        <begin position="1"/>
        <end position="360"/>
    </location>
</feature>
<feature type="modified residue" description="N5-methylglutamine" evidence="1">
    <location>
        <position position="237"/>
    </location>
</feature>
<reference key="1">
    <citation type="submission" date="2007-05" db="EMBL/GenBank/DDBJ databases">
        <title>Complete sequence of Pseudomonas putida F1.</title>
        <authorList>
            <consortium name="US DOE Joint Genome Institute"/>
            <person name="Copeland A."/>
            <person name="Lucas S."/>
            <person name="Lapidus A."/>
            <person name="Barry K."/>
            <person name="Detter J.C."/>
            <person name="Glavina del Rio T."/>
            <person name="Hammon N."/>
            <person name="Israni S."/>
            <person name="Dalin E."/>
            <person name="Tice H."/>
            <person name="Pitluck S."/>
            <person name="Chain P."/>
            <person name="Malfatti S."/>
            <person name="Shin M."/>
            <person name="Vergez L."/>
            <person name="Schmutz J."/>
            <person name="Larimer F."/>
            <person name="Land M."/>
            <person name="Hauser L."/>
            <person name="Kyrpides N."/>
            <person name="Lykidis A."/>
            <person name="Parales R."/>
            <person name="Richardson P."/>
        </authorList>
    </citation>
    <scope>NUCLEOTIDE SEQUENCE [LARGE SCALE GENOMIC DNA]</scope>
    <source>
        <strain>ATCC 700007 / DSM 6899 / JCM 31910 / BCRC 17059 / LMG 24140 / F1</strain>
    </source>
</reference>
<proteinExistence type="inferred from homology"/>
<name>RF1_PSEP1</name>
<organism>
    <name type="scientific">Pseudomonas putida (strain ATCC 700007 / DSM 6899 / JCM 31910 / BCRC 17059 / LMG 24140 / F1)</name>
    <dbReference type="NCBI Taxonomy" id="351746"/>
    <lineage>
        <taxon>Bacteria</taxon>
        <taxon>Pseudomonadati</taxon>
        <taxon>Pseudomonadota</taxon>
        <taxon>Gammaproteobacteria</taxon>
        <taxon>Pseudomonadales</taxon>
        <taxon>Pseudomonadaceae</taxon>
        <taxon>Pseudomonas</taxon>
    </lineage>
</organism>
<sequence>MKASLLNKLEILQDRFEELTALLGDAEVISDQTRFRAYSREYAEVEPVYAAYKEWRKVQDDLEGAQALLKDSDPDLREMALEEVREAKEQLLTLEAQLQRMLLPKDPNDGRNVFLEIRAGTGGDEAAIFSGDLFRMYSRYAEKRGWRLEILSENEGEHGGYKEIIARVEGENVYGKLKFESGAHRVQRVPETESQGRVHTSACTVAVLPEPDEQAAIEINPADLRVDTYRASGAGGQHVNKTDSAIRITHLPTGIVVECQEERSQHKNRARAMSWLSAKLNDMQTSAAQNAIASERKLLVGSGDRSERIRTYNYPQGRVTDHRINLTLYSLDDILSGGVDAVIEPLLAEYQADQLAALGD</sequence>
<evidence type="ECO:0000255" key="1">
    <source>
        <dbReference type="HAMAP-Rule" id="MF_00093"/>
    </source>
</evidence>
<accession>A5VYG5</accession>
<comment type="function">
    <text evidence="1">Peptide chain release factor 1 directs the termination of translation in response to the peptide chain termination codons UAG and UAA.</text>
</comment>
<comment type="subcellular location">
    <subcellularLocation>
        <location evidence="1">Cytoplasm</location>
    </subcellularLocation>
</comment>
<comment type="PTM">
    <text evidence="1">Methylated by PrmC. Methylation increases the termination efficiency of RF1.</text>
</comment>
<comment type="similarity">
    <text evidence="1">Belongs to the prokaryotic/mitochondrial release factor family.</text>
</comment>